<sequence length="426" mass="48404">MGSSTTEPDVGTTSNIETTTTLQNKNVNEVDQNKKSEQSNPSFKEVVLKDIGLGEATDLENVSDDVFNNYLAIRLERERKEIELLKESNLEKLSVIIKNCIECNSFTDETMKRLINLVDNNYNNSVHFSPKSKRRKLESTSPPMSSSSVPNKETNNIQQSNSYQLRNNYDEEQENQKSQTQGSKSLLSRPNIYSFPPKQTQPASQQHVQLAAIVQRQSTLTTPLSSTYGSNSNNSMNTQLPLSDKSLRSNVQEKIVQQGSMSQRDIINGSNMSSQYSSQVYPPGYYQTRYGQQMVVVYPDSDSPQINQTSTIQHQQQLPHTYPPHYHQQQQLHQNQLVPQQHQQLQQQSISKHQLFGQKNPMSPQSHYLPNNESQNLGVINHRRSFSSGTYPVVNSRSKSPDRSMPLTVQKQMNFLIHTPKHPPPT</sequence>
<feature type="chain" id="PRO_0000333399" description="Transcriptional activator POG1">
    <location>
        <begin position="1"/>
        <end position="426"/>
    </location>
</feature>
<feature type="region of interest" description="Disordered" evidence="2">
    <location>
        <begin position="1"/>
        <end position="41"/>
    </location>
</feature>
<feature type="region of interest" description="Disordered" evidence="2">
    <location>
        <begin position="123"/>
        <end position="158"/>
    </location>
</feature>
<feature type="region of interest" description="Disordered" evidence="2">
    <location>
        <begin position="170"/>
        <end position="208"/>
    </location>
</feature>
<feature type="compositionally biased region" description="Polar residues" evidence="2">
    <location>
        <begin position="1"/>
        <end position="30"/>
    </location>
</feature>
<feature type="compositionally biased region" description="Low complexity" evidence="2">
    <location>
        <begin position="139"/>
        <end position="150"/>
    </location>
</feature>
<feature type="compositionally biased region" description="Polar residues" evidence="2">
    <location>
        <begin position="176"/>
        <end position="188"/>
    </location>
</feature>
<feature type="compositionally biased region" description="Polar residues" evidence="2">
    <location>
        <begin position="197"/>
        <end position="208"/>
    </location>
</feature>
<accession>A7THE5</accession>
<protein>
    <recommendedName>
        <fullName>Transcriptional activator POG1</fullName>
    </recommendedName>
</protein>
<organism>
    <name type="scientific">Vanderwaltozyma polyspora (strain ATCC 22028 / DSM 70294 / BCRC 21397 / CBS 2163 / NBRC 10782 / NRRL Y-8283 / UCD 57-17)</name>
    <name type="common">Kluyveromyces polysporus</name>
    <dbReference type="NCBI Taxonomy" id="436907"/>
    <lineage>
        <taxon>Eukaryota</taxon>
        <taxon>Fungi</taxon>
        <taxon>Dikarya</taxon>
        <taxon>Ascomycota</taxon>
        <taxon>Saccharomycotina</taxon>
        <taxon>Saccharomycetes</taxon>
        <taxon>Saccharomycetales</taxon>
        <taxon>Saccharomycetaceae</taxon>
        <taxon>Vanderwaltozyma</taxon>
    </lineage>
</organism>
<dbReference type="EMBL" id="DS480391">
    <property type="protein sequence ID" value="EDO18269.1"/>
    <property type="molecule type" value="Genomic_DNA"/>
</dbReference>
<dbReference type="RefSeq" id="XP_001646127.1">
    <property type="nucleotide sequence ID" value="XM_001646077.1"/>
</dbReference>
<dbReference type="FunCoup" id="A7THE5">
    <property type="interactions" value="72"/>
</dbReference>
<dbReference type="GeneID" id="5546546"/>
<dbReference type="KEGG" id="vpo:Kpol_1039p18"/>
<dbReference type="eggNOG" id="ENOG502S5H5">
    <property type="taxonomic scope" value="Eukaryota"/>
</dbReference>
<dbReference type="HOGENOM" id="CLU_792700_0_0_1"/>
<dbReference type="InParanoid" id="A7THE5"/>
<dbReference type="OMA" id="PQNENIN"/>
<dbReference type="OrthoDB" id="4064025at2759"/>
<dbReference type="PhylomeDB" id="A7THE5"/>
<dbReference type="Proteomes" id="UP000000267">
    <property type="component" value="Unassembled WGS sequence"/>
</dbReference>
<dbReference type="GO" id="GO:0005634">
    <property type="term" value="C:nucleus"/>
    <property type="evidence" value="ECO:0007669"/>
    <property type="project" value="UniProtKB-SubCell"/>
</dbReference>
<dbReference type="GO" id="GO:0051301">
    <property type="term" value="P:cell division"/>
    <property type="evidence" value="ECO:0007669"/>
    <property type="project" value="UniProtKB-KW"/>
</dbReference>
<comment type="function">
    <text evidence="1">Transcriptional activator which promotes cell cycle recovery, after pheromone induced G1 arrest. May also be involved in stress-resistance (By similarity).</text>
</comment>
<comment type="subcellular location">
    <subcellularLocation>
        <location evidence="1">Nucleus</location>
    </subcellularLocation>
</comment>
<comment type="similarity">
    <text evidence="3">Belongs to the POG1 family.</text>
</comment>
<evidence type="ECO:0000250" key="1"/>
<evidence type="ECO:0000256" key="2">
    <source>
        <dbReference type="SAM" id="MobiDB-lite"/>
    </source>
</evidence>
<evidence type="ECO:0000305" key="3"/>
<name>POG1_VANPO</name>
<proteinExistence type="inferred from homology"/>
<gene>
    <name type="primary">POG1</name>
    <name type="ORF">Kpol_1039p18</name>
</gene>
<reference key="1">
    <citation type="journal article" date="2007" name="Proc. Natl. Acad. Sci. U.S.A.">
        <title>Independent sorting-out of thousands of duplicated gene pairs in two yeast species descended from a whole-genome duplication.</title>
        <authorList>
            <person name="Scannell D.R."/>
            <person name="Frank A.C."/>
            <person name="Conant G.C."/>
            <person name="Byrne K.P."/>
            <person name="Woolfit M."/>
            <person name="Wolfe K.H."/>
        </authorList>
    </citation>
    <scope>NUCLEOTIDE SEQUENCE [LARGE SCALE GENOMIC DNA]</scope>
    <source>
        <strain>ATCC 22028 / DSM 70294 / BCRC 21397 / CBS 2163 / NBRC 10782 / NRRL Y-8283 / UCD 57-17</strain>
    </source>
</reference>
<keyword id="KW-0010">Activator</keyword>
<keyword id="KW-0131">Cell cycle</keyword>
<keyword id="KW-0132">Cell division</keyword>
<keyword id="KW-0498">Mitosis</keyword>
<keyword id="KW-0539">Nucleus</keyword>
<keyword id="KW-1185">Reference proteome</keyword>
<keyword id="KW-0346">Stress response</keyword>
<keyword id="KW-0804">Transcription</keyword>
<keyword id="KW-0805">Transcription regulation</keyword>